<proteinExistence type="inferred from homology"/>
<protein>
    <recommendedName>
        <fullName evidence="1">Lon protease</fullName>
        <ecNumber evidence="1">3.4.21.53</ecNumber>
    </recommendedName>
    <alternativeName>
        <fullName evidence="1">ATP-dependent protease La</fullName>
    </alternativeName>
</protein>
<keyword id="KW-0067">ATP-binding</keyword>
<keyword id="KW-0963">Cytoplasm</keyword>
<keyword id="KW-0378">Hydrolase</keyword>
<keyword id="KW-0547">Nucleotide-binding</keyword>
<keyword id="KW-0645">Protease</keyword>
<keyword id="KW-0720">Serine protease</keyword>
<keyword id="KW-0346">Stress response</keyword>
<gene>
    <name evidence="1" type="primary">lon</name>
    <name type="ordered locus">WP0572</name>
</gene>
<organism>
    <name type="scientific">Wolbachia pipientis subsp. Culex pipiens (strain wPip)</name>
    <dbReference type="NCBI Taxonomy" id="570417"/>
    <lineage>
        <taxon>Bacteria</taxon>
        <taxon>Pseudomonadati</taxon>
        <taxon>Pseudomonadota</taxon>
        <taxon>Alphaproteobacteria</taxon>
        <taxon>Rickettsiales</taxon>
        <taxon>Anaplasmataceae</taxon>
        <taxon>Wolbachieae</taxon>
        <taxon>Wolbachia</taxon>
    </lineage>
</organism>
<reference key="1">
    <citation type="journal article" date="2008" name="Mol. Biol. Evol.">
        <title>Genome evolution of Wolbachia strain wPip from the Culex pipiens group.</title>
        <authorList>
            <person name="Klasson L."/>
            <person name="Walker T."/>
            <person name="Sebaihia M."/>
            <person name="Sanders M.J."/>
            <person name="Quail M.A."/>
            <person name="Lord A."/>
            <person name="Sanders S."/>
            <person name="Earl J."/>
            <person name="O'Neill S.L."/>
            <person name="Thomson N."/>
            <person name="Sinkins S.P."/>
            <person name="Parkhill J."/>
        </authorList>
    </citation>
    <scope>NUCLEOTIDE SEQUENCE [LARGE SCALE GENOMIC DNA]</scope>
    <source>
        <strain>wPip</strain>
    </source>
</reference>
<comment type="function">
    <text evidence="1">ATP-dependent serine protease that mediates the selective degradation of mutant and abnormal proteins as well as certain short-lived regulatory proteins. Required for cellular homeostasis and for survival from DNA damage and developmental changes induced by stress. Degrades polypeptides processively to yield small peptide fragments that are 5 to 10 amino acids long. Binds to DNA in a double-stranded, site-specific manner.</text>
</comment>
<comment type="catalytic activity">
    <reaction evidence="1">
        <text>Hydrolysis of proteins in presence of ATP.</text>
        <dbReference type="EC" id="3.4.21.53"/>
    </reaction>
</comment>
<comment type="subunit">
    <text evidence="1">Homohexamer. Organized in a ring with a central cavity.</text>
</comment>
<comment type="subcellular location">
    <subcellularLocation>
        <location evidence="1">Cytoplasm</location>
    </subcellularLocation>
</comment>
<comment type="induction">
    <text evidence="1">By heat shock.</text>
</comment>
<comment type="similarity">
    <text evidence="1">Belongs to the peptidase S16 family.</text>
</comment>
<dbReference type="EC" id="3.4.21.53" evidence="1"/>
<dbReference type="EMBL" id="AM999887">
    <property type="protein sequence ID" value="CAQ54680.1"/>
    <property type="molecule type" value="Genomic_DNA"/>
</dbReference>
<dbReference type="RefSeq" id="WP_007302001.1">
    <property type="nucleotide sequence ID" value="NC_010981.1"/>
</dbReference>
<dbReference type="SMR" id="B3CLB3"/>
<dbReference type="MEROPS" id="S16.001"/>
<dbReference type="KEGG" id="wpi:WP0572"/>
<dbReference type="eggNOG" id="COG0466">
    <property type="taxonomic scope" value="Bacteria"/>
</dbReference>
<dbReference type="HOGENOM" id="CLU_004109_4_3_5"/>
<dbReference type="Proteomes" id="UP000008814">
    <property type="component" value="Chromosome"/>
</dbReference>
<dbReference type="GO" id="GO:0005737">
    <property type="term" value="C:cytoplasm"/>
    <property type="evidence" value="ECO:0007669"/>
    <property type="project" value="UniProtKB-SubCell"/>
</dbReference>
<dbReference type="GO" id="GO:0005524">
    <property type="term" value="F:ATP binding"/>
    <property type="evidence" value="ECO:0007669"/>
    <property type="project" value="UniProtKB-UniRule"/>
</dbReference>
<dbReference type="GO" id="GO:0016887">
    <property type="term" value="F:ATP hydrolysis activity"/>
    <property type="evidence" value="ECO:0007669"/>
    <property type="project" value="UniProtKB-UniRule"/>
</dbReference>
<dbReference type="GO" id="GO:0004176">
    <property type="term" value="F:ATP-dependent peptidase activity"/>
    <property type="evidence" value="ECO:0007669"/>
    <property type="project" value="UniProtKB-UniRule"/>
</dbReference>
<dbReference type="GO" id="GO:0043565">
    <property type="term" value="F:sequence-specific DNA binding"/>
    <property type="evidence" value="ECO:0007669"/>
    <property type="project" value="UniProtKB-UniRule"/>
</dbReference>
<dbReference type="GO" id="GO:0004252">
    <property type="term" value="F:serine-type endopeptidase activity"/>
    <property type="evidence" value="ECO:0007669"/>
    <property type="project" value="UniProtKB-UniRule"/>
</dbReference>
<dbReference type="GO" id="GO:0034605">
    <property type="term" value="P:cellular response to heat"/>
    <property type="evidence" value="ECO:0007669"/>
    <property type="project" value="UniProtKB-UniRule"/>
</dbReference>
<dbReference type="GO" id="GO:0006515">
    <property type="term" value="P:protein quality control for misfolded or incompletely synthesized proteins"/>
    <property type="evidence" value="ECO:0007669"/>
    <property type="project" value="UniProtKB-UniRule"/>
</dbReference>
<dbReference type="CDD" id="cd19500">
    <property type="entry name" value="RecA-like_Lon"/>
    <property type="match status" value="1"/>
</dbReference>
<dbReference type="FunFam" id="1.20.5.5270:FF:000002">
    <property type="entry name" value="Lon protease homolog"/>
    <property type="match status" value="1"/>
</dbReference>
<dbReference type="FunFam" id="3.40.50.300:FF:000021">
    <property type="entry name" value="Lon protease homolog"/>
    <property type="match status" value="1"/>
</dbReference>
<dbReference type="Gene3D" id="1.10.8.60">
    <property type="match status" value="1"/>
</dbReference>
<dbReference type="Gene3D" id="1.20.5.5270">
    <property type="match status" value="1"/>
</dbReference>
<dbReference type="Gene3D" id="1.20.58.1480">
    <property type="match status" value="1"/>
</dbReference>
<dbReference type="Gene3D" id="3.30.230.10">
    <property type="match status" value="1"/>
</dbReference>
<dbReference type="Gene3D" id="2.30.130.40">
    <property type="entry name" value="LON domain-like"/>
    <property type="match status" value="1"/>
</dbReference>
<dbReference type="Gene3D" id="3.40.50.300">
    <property type="entry name" value="P-loop containing nucleotide triphosphate hydrolases"/>
    <property type="match status" value="1"/>
</dbReference>
<dbReference type="HAMAP" id="MF_01973">
    <property type="entry name" value="lon_bact"/>
    <property type="match status" value="1"/>
</dbReference>
<dbReference type="InterPro" id="IPR003593">
    <property type="entry name" value="AAA+_ATPase"/>
</dbReference>
<dbReference type="InterPro" id="IPR003959">
    <property type="entry name" value="ATPase_AAA_core"/>
</dbReference>
<dbReference type="InterPro" id="IPR027543">
    <property type="entry name" value="Lon_bac"/>
</dbReference>
<dbReference type="InterPro" id="IPR004815">
    <property type="entry name" value="Lon_bac/euk-typ"/>
</dbReference>
<dbReference type="InterPro" id="IPR054594">
    <property type="entry name" value="Lon_lid"/>
</dbReference>
<dbReference type="InterPro" id="IPR008269">
    <property type="entry name" value="Lon_proteolytic"/>
</dbReference>
<dbReference type="InterPro" id="IPR027065">
    <property type="entry name" value="Lon_Prtase"/>
</dbReference>
<dbReference type="InterPro" id="IPR003111">
    <property type="entry name" value="Lon_prtase_N"/>
</dbReference>
<dbReference type="InterPro" id="IPR046336">
    <property type="entry name" value="Lon_prtase_N_sf"/>
</dbReference>
<dbReference type="InterPro" id="IPR027417">
    <property type="entry name" value="P-loop_NTPase"/>
</dbReference>
<dbReference type="InterPro" id="IPR015947">
    <property type="entry name" value="PUA-like_sf"/>
</dbReference>
<dbReference type="InterPro" id="IPR020568">
    <property type="entry name" value="Ribosomal_Su5_D2-typ_SF"/>
</dbReference>
<dbReference type="InterPro" id="IPR014721">
    <property type="entry name" value="Ribsml_uS5_D2-typ_fold_subgr"/>
</dbReference>
<dbReference type="NCBIfam" id="TIGR00763">
    <property type="entry name" value="lon"/>
    <property type="match status" value="1"/>
</dbReference>
<dbReference type="NCBIfam" id="NF008053">
    <property type="entry name" value="PRK10787.1"/>
    <property type="match status" value="1"/>
</dbReference>
<dbReference type="PANTHER" id="PTHR10046">
    <property type="entry name" value="ATP DEPENDENT LON PROTEASE FAMILY MEMBER"/>
    <property type="match status" value="1"/>
</dbReference>
<dbReference type="Pfam" id="PF00004">
    <property type="entry name" value="AAA"/>
    <property type="match status" value="1"/>
</dbReference>
<dbReference type="Pfam" id="PF05362">
    <property type="entry name" value="Lon_C"/>
    <property type="match status" value="1"/>
</dbReference>
<dbReference type="Pfam" id="PF22667">
    <property type="entry name" value="Lon_lid"/>
    <property type="match status" value="1"/>
</dbReference>
<dbReference type="Pfam" id="PF02190">
    <property type="entry name" value="LON_substr_bdg"/>
    <property type="match status" value="1"/>
</dbReference>
<dbReference type="PIRSF" id="PIRSF001174">
    <property type="entry name" value="Lon_proteas"/>
    <property type="match status" value="1"/>
</dbReference>
<dbReference type="PRINTS" id="PR00830">
    <property type="entry name" value="ENDOLAPTASE"/>
</dbReference>
<dbReference type="SMART" id="SM00382">
    <property type="entry name" value="AAA"/>
    <property type="match status" value="1"/>
</dbReference>
<dbReference type="SMART" id="SM00464">
    <property type="entry name" value="LON"/>
    <property type="match status" value="1"/>
</dbReference>
<dbReference type="SUPFAM" id="SSF52540">
    <property type="entry name" value="P-loop containing nucleoside triphosphate hydrolases"/>
    <property type="match status" value="1"/>
</dbReference>
<dbReference type="SUPFAM" id="SSF88697">
    <property type="entry name" value="PUA domain-like"/>
    <property type="match status" value="1"/>
</dbReference>
<dbReference type="SUPFAM" id="SSF54211">
    <property type="entry name" value="Ribosomal protein S5 domain 2-like"/>
    <property type="match status" value="1"/>
</dbReference>
<dbReference type="PROSITE" id="PS51787">
    <property type="entry name" value="LON_N"/>
    <property type="match status" value="1"/>
</dbReference>
<dbReference type="PROSITE" id="PS51786">
    <property type="entry name" value="LON_PROTEOLYTIC"/>
    <property type="match status" value="1"/>
</dbReference>
<accession>B3CLB3</accession>
<feature type="chain" id="PRO_0000396616" description="Lon protease">
    <location>
        <begin position="1"/>
        <end position="818"/>
    </location>
</feature>
<feature type="domain" description="Lon N-terminal" evidence="3">
    <location>
        <begin position="14"/>
        <end position="216"/>
    </location>
</feature>
<feature type="domain" description="Lon proteolytic" evidence="2">
    <location>
        <begin position="605"/>
        <end position="786"/>
    </location>
</feature>
<feature type="active site" evidence="1">
    <location>
        <position position="692"/>
    </location>
</feature>
<feature type="active site" evidence="1">
    <location>
        <position position="735"/>
    </location>
</feature>
<feature type="binding site" evidence="1">
    <location>
        <begin position="370"/>
        <end position="377"/>
    </location>
    <ligand>
        <name>ATP</name>
        <dbReference type="ChEBI" id="CHEBI:30616"/>
    </ligand>
</feature>
<name>LON_WOLPP</name>
<sequence length="818" mass="91809">MSIGRAVNFNSTVLPVLPLRDVVIFPNIMLPLFVGREKSVHALEYAISSSSHQNEIFLIAQKDGSIDNPEPENLYEVGVLANIIQPLIKLPDNAVKVMIHGVRRGRVIEYISSHTLLQARVALDGHYEYGENEDNIDLEALRRSVIDAFDNWCKLSKKSRPEIIIDPIDQVKEVNQIVDMIASHLNIKVSDKQNILEVYNPKERLKKVFALIEREISILSAQNRLYKTIKSQVESTQKVYYLNEQLKAIQKELGEFENGDEGNILNEFEKKINETKLSEEAKEKAITDLKRYKKMNPISPEATVISSYLHWLLDLPWGKYKDAKINLNAAKKILDENHYGIEKVKDRIIEFLAVLKRVKEIKGPILCLVGPPGVGKTSLAKSMAKAVGRDFVRISLGGIRDESEIRGHRKTYIGSMPGKIIQHMKKANSCNPLFLLDEIDKMGSDSRGDPASALLEVLDTEHNKHFTDHYLEVEFDLSSVMFVATANSLNLPHPLRDRMEIIQLSGYTEDEKISIATHHLIPKLKKEHGLHQKEWEITNEALYELIRLYTRESGVRSMERELAKLMRKAVKAILTDKNKKISVETGNLQDYLGVRKYTFGIAENESLVGIVTGLAYTETGGDILMIESVLIPGKGEIKYTGKLGEVMQESIKAAYSYVRSNCLFFGIKPEKFQNNDIHLHVPEGAVPKDGPSAGSAVCTSIVSLMTNIPVNKSVAMTGEVTLRGRVLAIGGLREKLLAALRGSIKTVIIPSENEKDMQEIPANIKEEINVIFAENIDEVIKVALMHPITSIDDNNEISVSTSIENKDNTFPSSETLKH</sequence>
<evidence type="ECO:0000255" key="1">
    <source>
        <dbReference type="HAMAP-Rule" id="MF_01973"/>
    </source>
</evidence>
<evidence type="ECO:0000255" key="2">
    <source>
        <dbReference type="PROSITE-ProRule" id="PRU01122"/>
    </source>
</evidence>
<evidence type="ECO:0000255" key="3">
    <source>
        <dbReference type="PROSITE-ProRule" id="PRU01123"/>
    </source>
</evidence>